<reference key="1">
    <citation type="journal article" date="2006" name="Proc. Natl. Acad. Sci. U.S.A.">
        <title>Comparative genomics of the lactic acid bacteria.</title>
        <authorList>
            <person name="Makarova K.S."/>
            <person name="Slesarev A."/>
            <person name="Wolf Y.I."/>
            <person name="Sorokin A."/>
            <person name="Mirkin B."/>
            <person name="Koonin E.V."/>
            <person name="Pavlov A."/>
            <person name="Pavlova N."/>
            <person name="Karamychev V."/>
            <person name="Polouchine N."/>
            <person name="Shakhova V."/>
            <person name="Grigoriev I."/>
            <person name="Lou Y."/>
            <person name="Rohksar D."/>
            <person name="Lucas S."/>
            <person name="Huang K."/>
            <person name="Goodstein D.M."/>
            <person name="Hawkins T."/>
            <person name="Plengvidhya V."/>
            <person name="Welker D."/>
            <person name="Hughes J."/>
            <person name="Goh Y."/>
            <person name="Benson A."/>
            <person name="Baldwin K."/>
            <person name="Lee J.-H."/>
            <person name="Diaz-Muniz I."/>
            <person name="Dosti B."/>
            <person name="Smeianov V."/>
            <person name="Wechter W."/>
            <person name="Barabote R."/>
            <person name="Lorca G."/>
            <person name="Altermann E."/>
            <person name="Barrangou R."/>
            <person name="Ganesan B."/>
            <person name="Xie Y."/>
            <person name="Rawsthorne H."/>
            <person name="Tamir D."/>
            <person name="Parker C."/>
            <person name="Breidt F."/>
            <person name="Broadbent J.R."/>
            <person name="Hutkins R."/>
            <person name="O'Sullivan D."/>
            <person name="Steele J."/>
            <person name="Unlu G."/>
            <person name="Saier M.H. Jr."/>
            <person name="Klaenhammer T."/>
            <person name="Richardson P."/>
            <person name="Kozyavkin S."/>
            <person name="Weimer B.C."/>
            <person name="Mills D.A."/>
        </authorList>
    </citation>
    <scope>NUCLEOTIDE SEQUENCE [LARGE SCALE GENOMIC DNA]</scope>
    <source>
        <strain>SK11</strain>
    </source>
</reference>
<evidence type="ECO:0000255" key="1">
    <source>
        <dbReference type="HAMAP-Rule" id="MF_00473"/>
    </source>
</evidence>
<feature type="chain" id="PRO_1000013981" description="Glucose-6-phosphate isomerase">
    <location>
        <begin position="1"/>
        <end position="448"/>
    </location>
</feature>
<feature type="active site" description="Proton donor" evidence="1">
    <location>
        <position position="290"/>
    </location>
</feature>
<feature type="active site" evidence="1">
    <location>
        <position position="311"/>
    </location>
</feature>
<feature type="active site" evidence="1">
    <location>
        <position position="425"/>
    </location>
</feature>
<name>G6PI_LACLS</name>
<sequence length="448" mass="49643">MAHIKFDYSKLTPFVAENELYEIQWQIDGAAKLLHEGKGAGSDYIGWLDLPEDYDKEEFARIQKAAKKIKSDSEVLIVIGIGGSYLGARAAIDFLSNSFVNLQTAEERKAPRILYAGNSISSSYLADLVDYVADKDFSVNVISKSGTTTEPAIAFRVFEEMLVKKYGREEANKRIYATTDKEKGAVKVNADANNWETFVVPDSVGGRFSVLTAVGLLPIAASGADITALMEGANAARKEYTSTNVHENDAYAYAALRNILYRKGKFSEILINYEPSLQYFSEWWKQLAGESEGKDQKGIYPTSANFSTDLHSLGQWIQEGTRTVFETAIRIEKPRKNINIPELDADLDGLGYLQGKDVDFVNKKAADGVLLAHTDGNVPNMIVTLPEQDEFTLGYAIYFFELAIGVSGYLNGINPFNQPGVEAYKKNMFALLGKPGFEELSKELNDRL</sequence>
<gene>
    <name evidence="1" type="primary">pgi</name>
    <name type="ordered locus">LACR_2470</name>
</gene>
<proteinExistence type="inferred from homology"/>
<dbReference type="EC" id="5.3.1.9" evidence="1"/>
<dbReference type="EMBL" id="CP000425">
    <property type="protein sequence ID" value="ABJ73907.1"/>
    <property type="molecule type" value="Genomic_DNA"/>
</dbReference>
<dbReference type="RefSeq" id="WP_011677219.1">
    <property type="nucleotide sequence ID" value="NC_008527.1"/>
</dbReference>
<dbReference type="SMR" id="Q02VW5"/>
<dbReference type="KEGG" id="llc:LACR_2470"/>
<dbReference type="HOGENOM" id="CLU_037303_0_1_9"/>
<dbReference type="UniPathway" id="UPA00109">
    <property type="reaction ID" value="UER00181"/>
</dbReference>
<dbReference type="UniPathway" id="UPA00138"/>
<dbReference type="Proteomes" id="UP000000240">
    <property type="component" value="Chromosome"/>
</dbReference>
<dbReference type="GO" id="GO:0005829">
    <property type="term" value="C:cytosol"/>
    <property type="evidence" value="ECO:0007669"/>
    <property type="project" value="TreeGrafter"/>
</dbReference>
<dbReference type="GO" id="GO:0097367">
    <property type="term" value="F:carbohydrate derivative binding"/>
    <property type="evidence" value="ECO:0007669"/>
    <property type="project" value="InterPro"/>
</dbReference>
<dbReference type="GO" id="GO:0004347">
    <property type="term" value="F:glucose-6-phosphate isomerase activity"/>
    <property type="evidence" value="ECO:0007669"/>
    <property type="project" value="UniProtKB-UniRule"/>
</dbReference>
<dbReference type="GO" id="GO:0048029">
    <property type="term" value="F:monosaccharide binding"/>
    <property type="evidence" value="ECO:0007669"/>
    <property type="project" value="TreeGrafter"/>
</dbReference>
<dbReference type="GO" id="GO:0006094">
    <property type="term" value="P:gluconeogenesis"/>
    <property type="evidence" value="ECO:0007669"/>
    <property type="project" value="UniProtKB-UniRule"/>
</dbReference>
<dbReference type="GO" id="GO:0051156">
    <property type="term" value="P:glucose 6-phosphate metabolic process"/>
    <property type="evidence" value="ECO:0007669"/>
    <property type="project" value="TreeGrafter"/>
</dbReference>
<dbReference type="GO" id="GO:0006096">
    <property type="term" value="P:glycolytic process"/>
    <property type="evidence" value="ECO:0007669"/>
    <property type="project" value="UniProtKB-UniRule"/>
</dbReference>
<dbReference type="CDD" id="cd05015">
    <property type="entry name" value="SIS_PGI_1"/>
    <property type="match status" value="1"/>
</dbReference>
<dbReference type="CDD" id="cd05016">
    <property type="entry name" value="SIS_PGI_2"/>
    <property type="match status" value="1"/>
</dbReference>
<dbReference type="FunFam" id="3.40.50.10490:FF:000015">
    <property type="entry name" value="Glucose-6-phosphate isomerase"/>
    <property type="match status" value="1"/>
</dbReference>
<dbReference type="FunFam" id="3.40.50.10490:FF:000016">
    <property type="entry name" value="Glucose-6-phosphate isomerase"/>
    <property type="match status" value="1"/>
</dbReference>
<dbReference type="Gene3D" id="3.40.50.10490">
    <property type="entry name" value="Glucose-6-phosphate isomerase like protein, domain 1"/>
    <property type="match status" value="2"/>
</dbReference>
<dbReference type="HAMAP" id="MF_00473">
    <property type="entry name" value="G6P_isomerase"/>
    <property type="match status" value="1"/>
</dbReference>
<dbReference type="InterPro" id="IPR001672">
    <property type="entry name" value="G6P_Isomerase"/>
</dbReference>
<dbReference type="InterPro" id="IPR018189">
    <property type="entry name" value="Phosphoglucose_isomerase_CS"/>
</dbReference>
<dbReference type="InterPro" id="IPR046348">
    <property type="entry name" value="SIS_dom_sf"/>
</dbReference>
<dbReference type="InterPro" id="IPR035476">
    <property type="entry name" value="SIS_PGI_1"/>
</dbReference>
<dbReference type="InterPro" id="IPR035482">
    <property type="entry name" value="SIS_PGI_2"/>
</dbReference>
<dbReference type="NCBIfam" id="NF010697">
    <property type="entry name" value="PRK14097.1"/>
    <property type="match status" value="1"/>
</dbReference>
<dbReference type="PANTHER" id="PTHR11469">
    <property type="entry name" value="GLUCOSE-6-PHOSPHATE ISOMERASE"/>
    <property type="match status" value="1"/>
</dbReference>
<dbReference type="PANTHER" id="PTHR11469:SF1">
    <property type="entry name" value="GLUCOSE-6-PHOSPHATE ISOMERASE"/>
    <property type="match status" value="1"/>
</dbReference>
<dbReference type="Pfam" id="PF00342">
    <property type="entry name" value="PGI"/>
    <property type="match status" value="1"/>
</dbReference>
<dbReference type="PRINTS" id="PR00662">
    <property type="entry name" value="G6PISOMERASE"/>
</dbReference>
<dbReference type="SUPFAM" id="SSF53697">
    <property type="entry name" value="SIS domain"/>
    <property type="match status" value="1"/>
</dbReference>
<dbReference type="PROSITE" id="PS00765">
    <property type="entry name" value="P_GLUCOSE_ISOMERASE_1"/>
    <property type="match status" value="1"/>
</dbReference>
<dbReference type="PROSITE" id="PS00174">
    <property type="entry name" value="P_GLUCOSE_ISOMERASE_2"/>
    <property type="match status" value="1"/>
</dbReference>
<dbReference type="PROSITE" id="PS51463">
    <property type="entry name" value="P_GLUCOSE_ISOMERASE_3"/>
    <property type="match status" value="1"/>
</dbReference>
<keyword id="KW-0963">Cytoplasm</keyword>
<keyword id="KW-0312">Gluconeogenesis</keyword>
<keyword id="KW-0324">Glycolysis</keyword>
<keyword id="KW-0413">Isomerase</keyword>
<protein>
    <recommendedName>
        <fullName evidence="1">Glucose-6-phosphate isomerase</fullName>
        <shortName evidence="1">GPI</shortName>
        <ecNumber evidence="1">5.3.1.9</ecNumber>
    </recommendedName>
    <alternativeName>
        <fullName evidence="1">Phosphoglucose isomerase</fullName>
        <shortName evidence="1">PGI</shortName>
    </alternativeName>
    <alternativeName>
        <fullName evidence="1">Phosphohexose isomerase</fullName>
        <shortName evidence="1">PHI</shortName>
    </alternativeName>
</protein>
<organism>
    <name type="scientific">Lactococcus lactis subsp. cremoris (strain SK11)</name>
    <dbReference type="NCBI Taxonomy" id="272622"/>
    <lineage>
        <taxon>Bacteria</taxon>
        <taxon>Bacillati</taxon>
        <taxon>Bacillota</taxon>
        <taxon>Bacilli</taxon>
        <taxon>Lactobacillales</taxon>
        <taxon>Streptococcaceae</taxon>
        <taxon>Lactococcus</taxon>
        <taxon>Lactococcus cremoris subsp. cremoris</taxon>
    </lineage>
</organism>
<accession>Q02VW5</accession>
<comment type="function">
    <text evidence="1">Catalyzes the reversible isomerization of glucose-6-phosphate to fructose-6-phosphate.</text>
</comment>
<comment type="catalytic activity">
    <reaction evidence="1">
        <text>alpha-D-glucose 6-phosphate = beta-D-fructose 6-phosphate</text>
        <dbReference type="Rhea" id="RHEA:11816"/>
        <dbReference type="ChEBI" id="CHEBI:57634"/>
        <dbReference type="ChEBI" id="CHEBI:58225"/>
        <dbReference type="EC" id="5.3.1.9"/>
    </reaction>
</comment>
<comment type="pathway">
    <text evidence="1">Carbohydrate biosynthesis; gluconeogenesis.</text>
</comment>
<comment type="pathway">
    <text evidence="1">Carbohydrate degradation; glycolysis; D-glyceraldehyde 3-phosphate and glycerone phosphate from D-glucose: step 2/4.</text>
</comment>
<comment type="subcellular location">
    <subcellularLocation>
        <location evidence="1">Cytoplasm</location>
    </subcellularLocation>
</comment>
<comment type="similarity">
    <text evidence="1">Belongs to the GPI family.</text>
</comment>